<accession>Q5NF58</accession>
<proteinExistence type="inferred from homology"/>
<organism>
    <name type="scientific">Francisella tularensis subsp. tularensis (strain SCHU S4 / Schu 4)</name>
    <dbReference type="NCBI Taxonomy" id="177416"/>
    <lineage>
        <taxon>Bacteria</taxon>
        <taxon>Pseudomonadati</taxon>
        <taxon>Pseudomonadota</taxon>
        <taxon>Gammaproteobacteria</taxon>
        <taxon>Thiotrichales</taxon>
        <taxon>Francisellaceae</taxon>
        <taxon>Francisella</taxon>
    </lineage>
</organism>
<sequence>MKSVLGFKKAKVTEKISMVTCYDYTLAKIINSTDIDCILVGDSGGMVLLGKKNTTYTTLDDMQFMTQAVANGATDKFIVADLPFMSYRQSLETTMQAVMALIQSGAHAIKLEGSSGNLDIIKHIVDSGVPVMGHIGMTPQFINSFGGFKVQGRTEEAAKHLLEEAKLLEQAGCFGIVLECIPANIAKDITQNLDIPTIGIGAGSNTDGQILVLQDMLGMNTDFQPKFVKKYIDGSKLFSDAINTYVKETKANTFPTKEHCYDYC</sequence>
<gene>
    <name evidence="1" type="primary">panB</name>
    <name type="ordered locus">FTT_1389</name>
</gene>
<keyword id="KW-0963">Cytoplasm</keyword>
<keyword id="KW-0460">Magnesium</keyword>
<keyword id="KW-0479">Metal-binding</keyword>
<keyword id="KW-0566">Pantothenate biosynthesis</keyword>
<keyword id="KW-1185">Reference proteome</keyword>
<keyword id="KW-0808">Transferase</keyword>
<feature type="chain" id="PRO_0000184846" description="3-methyl-2-oxobutanoate hydroxymethyltransferase">
    <location>
        <begin position="1"/>
        <end position="264"/>
    </location>
</feature>
<feature type="active site" description="Proton acceptor" evidence="1">
    <location>
        <position position="179"/>
    </location>
</feature>
<feature type="binding site" evidence="1">
    <location>
        <begin position="42"/>
        <end position="43"/>
    </location>
    <ligand>
        <name>3-methyl-2-oxobutanoate</name>
        <dbReference type="ChEBI" id="CHEBI:11851"/>
    </ligand>
</feature>
<feature type="binding site" evidence="1">
    <location>
        <position position="42"/>
    </location>
    <ligand>
        <name>Mg(2+)</name>
        <dbReference type="ChEBI" id="CHEBI:18420"/>
    </ligand>
</feature>
<feature type="binding site" evidence="1">
    <location>
        <position position="81"/>
    </location>
    <ligand>
        <name>3-methyl-2-oxobutanoate</name>
        <dbReference type="ChEBI" id="CHEBI:11851"/>
    </ligand>
</feature>
<feature type="binding site" evidence="1">
    <location>
        <position position="81"/>
    </location>
    <ligand>
        <name>Mg(2+)</name>
        <dbReference type="ChEBI" id="CHEBI:18420"/>
    </ligand>
</feature>
<feature type="binding site" evidence="1">
    <location>
        <position position="110"/>
    </location>
    <ligand>
        <name>3-methyl-2-oxobutanoate</name>
        <dbReference type="ChEBI" id="CHEBI:11851"/>
    </ligand>
</feature>
<feature type="binding site" evidence="1">
    <location>
        <position position="112"/>
    </location>
    <ligand>
        <name>Mg(2+)</name>
        <dbReference type="ChEBI" id="CHEBI:18420"/>
    </ligand>
</feature>
<name>PANB_FRATT</name>
<comment type="function">
    <text evidence="1">Catalyzes the reversible reaction in which hydroxymethyl group from 5,10-methylenetetrahydrofolate is transferred onto alpha-ketoisovalerate to form ketopantoate.</text>
</comment>
<comment type="catalytic activity">
    <reaction evidence="1">
        <text>3-methyl-2-oxobutanoate + (6R)-5,10-methylene-5,6,7,8-tetrahydrofolate + H2O = 2-dehydropantoate + (6S)-5,6,7,8-tetrahydrofolate</text>
        <dbReference type="Rhea" id="RHEA:11824"/>
        <dbReference type="ChEBI" id="CHEBI:11561"/>
        <dbReference type="ChEBI" id="CHEBI:11851"/>
        <dbReference type="ChEBI" id="CHEBI:15377"/>
        <dbReference type="ChEBI" id="CHEBI:15636"/>
        <dbReference type="ChEBI" id="CHEBI:57453"/>
        <dbReference type="EC" id="2.1.2.11"/>
    </reaction>
</comment>
<comment type="cofactor">
    <cofactor evidence="1">
        <name>Mg(2+)</name>
        <dbReference type="ChEBI" id="CHEBI:18420"/>
    </cofactor>
    <text evidence="1">Binds 1 Mg(2+) ion per subunit.</text>
</comment>
<comment type="pathway">
    <text evidence="1">Cofactor biosynthesis; (R)-pantothenate biosynthesis; (R)-pantoate from 3-methyl-2-oxobutanoate: step 1/2.</text>
</comment>
<comment type="subunit">
    <text evidence="1">Homodecamer; pentamer of dimers.</text>
</comment>
<comment type="subcellular location">
    <subcellularLocation>
        <location evidence="1">Cytoplasm</location>
    </subcellularLocation>
</comment>
<comment type="similarity">
    <text evidence="1">Belongs to the PanB family.</text>
</comment>
<evidence type="ECO:0000255" key="1">
    <source>
        <dbReference type="HAMAP-Rule" id="MF_00156"/>
    </source>
</evidence>
<reference key="1">
    <citation type="journal article" date="2005" name="Nat. Genet.">
        <title>The complete genome sequence of Francisella tularensis, the causative agent of tularemia.</title>
        <authorList>
            <person name="Larsson P."/>
            <person name="Oyston P.C.F."/>
            <person name="Chain P."/>
            <person name="Chu M.C."/>
            <person name="Duffield M."/>
            <person name="Fuxelius H.-H."/>
            <person name="Garcia E."/>
            <person name="Haelltorp G."/>
            <person name="Johansson D."/>
            <person name="Isherwood K.E."/>
            <person name="Karp P.D."/>
            <person name="Larsson E."/>
            <person name="Liu Y."/>
            <person name="Michell S."/>
            <person name="Prior J."/>
            <person name="Prior R."/>
            <person name="Malfatti S."/>
            <person name="Sjoestedt A."/>
            <person name="Svensson K."/>
            <person name="Thompson N."/>
            <person name="Vergez L."/>
            <person name="Wagg J.K."/>
            <person name="Wren B.W."/>
            <person name="Lindler L.E."/>
            <person name="Andersson S.G.E."/>
            <person name="Forsman M."/>
            <person name="Titball R.W."/>
        </authorList>
    </citation>
    <scope>NUCLEOTIDE SEQUENCE [LARGE SCALE GENOMIC DNA]</scope>
    <source>
        <strain>SCHU S4 / Schu 4</strain>
    </source>
</reference>
<protein>
    <recommendedName>
        <fullName evidence="1">3-methyl-2-oxobutanoate hydroxymethyltransferase</fullName>
        <ecNumber evidence="1">2.1.2.11</ecNumber>
    </recommendedName>
    <alternativeName>
        <fullName evidence="1">Ketopantoate hydroxymethyltransferase</fullName>
        <shortName evidence="1">KPHMT</shortName>
    </alternativeName>
</protein>
<dbReference type="EC" id="2.1.2.11" evidence="1"/>
<dbReference type="EMBL" id="AJ749949">
    <property type="protein sequence ID" value="CAG46022.1"/>
    <property type="molecule type" value="Genomic_DNA"/>
</dbReference>
<dbReference type="RefSeq" id="WP_003029629.1">
    <property type="nucleotide sequence ID" value="NC_006570.2"/>
</dbReference>
<dbReference type="RefSeq" id="YP_170334.1">
    <property type="nucleotide sequence ID" value="NC_006570.2"/>
</dbReference>
<dbReference type="SMR" id="Q5NF58"/>
<dbReference type="STRING" id="177416.FTT_1389"/>
<dbReference type="DNASU" id="3191227"/>
<dbReference type="EnsemblBacteria" id="CAG46022">
    <property type="protein sequence ID" value="CAG46022"/>
    <property type="gene ID" value="FTT_1389"/>
</dbReference>
<dbReference type="KEGG" id="ftu:FTT_1389"/>
<dbReference type="eggNOG" id="COG0413">
    <property type="taxonomic scope" value="Bacteria"/>
</dbReference>
<dbReference type="OrthoDB" id="9781789at2"/>
<dbReference type="UniPathway" id="UPA00028">
    <property type="reaction ID" value="UER00003"/>
</dbReference>
<dbReference type="Proteomes" id="UP000001174">
    <property type="component" value="Chromosome"/>
</dbReference>
<dbReference type="GO" id="GO:0005737">
    <property type="term" value="C:cytoplasm"/>
    <property type="evidence" value="ECO:0007669"/>
    <property type="project" value="UniProtKB-SubCell"/>
</dbReference>
<dbReference type="GO" id="GO:0003864">
    <property type="term" value="F:3-methyl-2-oxobutanoate hydroxymethyltransferase activity"/>
    <property type="evidence" value="ECO:0007669"/>
    <property type="project" value="UniProtKB-UniRule"/>
</dbReference>
<dbReference type="GO" id="GO:0000287">
    <property type="term" value="F:magnesium ion binding"/>
    <property type="evidence" value="ECO:0007669"/>
    <property type="project" value="TreeGrafter"/>
</dbReference>
<dbReference type="GO" id="GO:0015940">
    <property type="term" value="P:pantothenate biosynthetic process"/>
    <property type="evidence" value="ECO:0007669"/>
    <property type="project" value="UniProtKB-UniRule"/>
</dbReference>
<dbReference type="CDD" id="cd06557">
    <property type="entry name" value="KPHMT-like"/>
    <property type="match status" value="1"/>
</dbReference>
<dbReference type="FunFam" id="3.20.20.60:FF:000003">
    <property type="entry name" value="3-methyl-2-oxobutanoate hydroxymethyltransferase"/>
    <property type="match status" value="1"/>
</dbReference>
<dbReference type="Gene3D" id="3.20.20.60">
    <property type="entry name" value="Phosphoenolpyruvate-binding domains"/>
    <property type="match status" value="1"/>
</dbReference>
<dbReference type="HAMAP" id="MF_00156">
    <property type="entry name" value="PanB"/>
    <property type="match status" value="1"/>
</dbReference>
<dbReference type="InterPro" id="IPR003700">
    <property type="entry name" value="Pantoate_hydroxy_MeTrfase"/>
</dbReference>
<dbReference type="InterPro" id="IPR015813">
    <property type="entry name" value="Pyrv/PenolPyrv_kinase-like_dom"/>
</dbReference>
<dbReference type="InterPro" id="IPR040442">
    <property type="entry name" value="Pyrv_kinase-like_dom_sf"/>
</dbReference>
<dbReference type="NCBIfam" id="TIGR00222">
    <property type="entry name" value="panB"/>
    <property type="match status" value="1"/>
</dbReference>
<dbReference type="NCBIfam" id="NF001452">
    <property type="entry name" value="PRK00311.1"/>
    <property type="match status" value="1"/>
</dbReference>
<dbReference type="PANTHER" id="PTHR20881">
    <property type="entry name" value="3-METHYL-2-OXOBUTANOATE HYDROXYMETHYLTRANSFERASE"/>
    <property type="match status" value="1"/>
</dbReference>
<dbReference type="PANTHER" id="PTHR20881:SF0">
    <property type="entry name" value="3-METHYL-2-OXOBUTANOATE HYDROXYMETHYLTRANSFERASE"/>
    <property type="match status" value="1"/>
</dbReference>
<dbReference type="Pfam" id="PF02548">
    <property type="entry name" value="Pantoate_transf"/>
    <property type="match status" value="1"/>
</dbReference>
<dbReference type="PIRSF" id="PIRSF000388">
    <property type="entry name" value="Pantoate_hydroxy_MeTrfase"/>
    <property type="match status" value="1"/>
</dbReference>
<dbReference type="SUPFAM" id="SSF51621">
    <property type="entry name" value="Phosphoenolpyruvate/pyruvate domain"/>
    <property type="match status" value="1"/>
</dbReference>